<comment type="similarity">
    <text evidence="1 3">Belongs to the jacalin lectin family.</text>
</comment>
<feature type="chain" id="PRO_0000430372" description="Jacalin-related lectin 5">
    <location>
        <begin position="1"/>
        <end position="730"/>
    </location>
</feature>
<feature type="domain" description="Jacalin-type lectin 1" evidence="1">
    <location>
        <begin position="1"/>
        <end position="126"/>
    </location>
</feature>
<feature type="domain" description="Jacalin-type lectin 2" evidence="1">
    <location>
        <begin position="430"/>
        <end position="572"/>
    </location>
</feature>
<feature type="domain" description="Jacalin-type lectin 3" evidence="1">
    <location>
        <begin position="584"/>
        <end position="727"/>
    </location>
</feature>
<feature type="region of interest" description="Disordered" evidence="2">
    <location>
        <begin position="121"/>
        <end position="450"/>
    </location>
</feature>
<feature type="compositionally biased region" description="Low complexity" evidence="2">
    <location>
        <begin position="138"/>
        <end position="153"/>
    </location>
</feature>
<feature type="compositionally biased region" description="Low complexity" evidence="2">
    <location>
        <begin position="168"/>
        <end position="179"/>
    </location>
</feature>
<feature type="compositionally biased region" description="Low complexity" evidence="2">
    <location>
        <begin position="196"/>
        <end position="207"/>
    </location>
</feature>
<feature type="compositionally biased region" description="Low complexity" evidence="2">
    <location>
        <begin position="248"/>
        <end position="261"/>
    </location>
</feature>
<feature type="compositionally biased region" description="Polar residues" evidence="2">
    <location>
        <begin position="275"/>
        <end position="307"/>
    </location>
</feature>
<feature type="compositionally biased region" description="Gly residues" evidence="2">
    <location>
        <begin position="314"/>
        <end position="323"/>
    </location>
</feature>
<feature type="compositionally biased region" description="Low complexity" evidence="2">
    <location>
        <begin position="343"/>
        <end position="358"/>
    </location>
</feature>
<feature type="compositionally biased region" description="Polar residues" evidence="2">
    <location>
        <begin position="366"/>
        <end position="375"/>
    </location>
</feature>
<feature type="compositionally biased region" description="Polar residues" evidence="2">
    <location>
        <begin position="388"/>
        <end position="416"/>
    </location>
</feature>
<feature type="compositionally biased region" description="Low complexity" evidence="2">
    <location>
        <begin position="417"/>
        <end position="429"/>
    </location>
</feature>
<reference key="1">
    <citation type="journal article" date="2000" name="Nature">
        <title>Sequence and analysis of chromosome 1 of the plant Arabidopsis thaliana.</title>
        <authorList>
            <person name="Theologis A."/>
            <person name="Ecker J.R."/>
            <person name="Palm C.J."/>
            <person name="Federspiel N.A."/>
            <person name="Kaul S."/>
            <person name="White O."/>
            <person name="Alonso J."/>
            <person name="Altafi H."/>
            <person name="Araujo R."/>
            <person name="Bowman C.L."/>
            <person name="Brooks S.Y."/>
            <person name="Buehler E."/>
            <person name="Chan A."/>
            <person name="Chao Q."/>
            <person name="Chen H."/>
            <person name="Cheuk R.F."/>
            <person name="Chin C.W."/>
            <person name="Chung M.K."/>
            <person name="Conn L."/>
            <person name="Conway A.B."/>
            <person name="Conway A.R."/>
            <person name="Creasy T.H."/>
            <person name="Dewar K."/>
            <person name="Dunn P."/>
            <person name="Etgu P."/>
            <person name="Feldblyum T.V."/>
            <person name="Feng J.-D."/>
            <person name="Fong B."/>
            <person name="Fujii C.Y."/>
            <person name="Gill J.E."/>
            <person name="Goldsmith A.D."/>
            <person name="Haas B."/>
            <person name="Hansen N.F."/>
            <person name="Hughes B."/>
            <person name="Huizar L."/>
            <person name="Hunter J.L."/>
            <person name="Jenkins J."/>
            <person name="Johnson-Hopson C."/>
            <person name="Khan S."/>
            <person name="Khaykin E."/>
            <person name="Kim C.J."/>
            <person name="Koo H.L."/>
            <person name="Kremenetskaia I."/>
            <person name="Kurtz D.B."/>
            <person name="Kwan A."/>
            <person name="Lam B."/>
            <person name="Langin-Hooper S."/>
            <person name="Lee A."/>
            <person name="Lee J.M."/>
            <person name="Lenz C.A."/>
            <person name="Li J.H."/>
            <person name="Li Y.-P."/>
            <person name="Lin X."/>
            <person name="Liu S.X."/>
            <person name="Liu Z.A."/>
            <person name="Luros J.S."/>
            <person name="Maiti R."/>
            <person name="Marziali A."/>
            <person name="Militscher J."/>
            <person name="Miranda M."/>
            <person name="Nguyen M."/>
            <person name="Nierman W.C."/>
            <person name="Osborne B.I."/>
            <person name="Pai G."/>
            <person name="Peterson J."/>
            <person name="Pham P.K."/>
            <person name="Rizzo M."/>
            <person name="Rooney T."/>
            <person name="Rowley D."/>
            <person name="Sakano H."/>
            <person name="Salzberg S.L."/>
            <person name="Schwartz J.R."/>
            <person name="Shinn P."/>
            <person name="Southwick A.M."/>
            <person name="Sun H."/>
            <person name="Tallon L.J."/>
            <person name="Tambunga G."/>
            <person name="Toriumi M.J."/>
            <person name="Town C.D."/>
            <person name="Utterback T."/>
            <person name="Van Aken S."/>
            <person name="Vaysberg M."/>
            <person name="Vysotskaia V.S."/>
            <person name="Walker M."/>
            <person name="Wu D."/>
            <person name="Yu G."/>
            <person name="Fraser C.M."/>
            <person name="Venter J.C."/>
            <person name="Davis R.W."/>
        </authorList>
    </citation>
    <scope>NUCLEOTIDE SEQUENCE [LARGE SCALE GENOMIC DNA]</scope>
    <source>
        <strain>cv. Columbia</strain>
    </source>
</reference>
<reference key="2">
    <citation type="journal article" date="2017" name="Plant J.">
        <title>Araport11: a complete reannotation of the Arabidopsis thaliana reference genome.</title>
        <authorList>
            <person name="Cheng C.Y."/>
            <person name="Krishnakumar V."/>
            <person name="Chan A.P."/>
            <person name="Thibaud-Nissen F."/>
            <person name="Schobel S."/>
            <person name="Town C.D."/>
        </authorList>
    </citation>
    <scope>GENOME REANNOTATION</scope>
    <source>
        <strain>cv. Columbia</strain>
    </source>
</reference>
<reference key="3">
    <citation type="submission" date="2006-07" db="EMBL/GenBank/DDBJ databases">
        <title>Large-scale analysis of RIKEN Arabidopsis full-length (RAFL) cDNAs.</title>
        <authorList>
            <person name="Totoki Y."/>
            <person name="Seki M."/>
            <person name="Ishida J."/>
            <person name="Nakajima M."/>
            <person name="Enju A."/>
            <person name="Kamiya A."/>
            <person name="Narusaka M."/>
            <person name="Shin-i T."/>
            <person name="Nakagawa M."/>
            <person name="Sakamoto N."/>
            <person name="Oishi K."/>
            <person name="Kohara Y."/>
            <person name="Kobayashi M."/>
            <person name="Toyoda A."/>
            <person name="Sakaki Y."/>
            <person name="Sakurai T."/>
            <person name="Iida K."/>
            <person name="Akiyama K."/>
            <person name="Satou M."/>
            <person name="Toyoda T."/>
            <person name="Konagaya A."/>
            <person name="Carninci P."/>
            <person name="Kawai J."/>
            <person name="Hayashizaki Y."/>
            <person name="Shinozaki K."/>
        </authorList>
    </citation>
    <scope>NUCLEOTIDE SEQUENCE [LARGE SCALE MRNA]</scope>
    <source>
        <strain>cv. Columbia</strain>
    </source>
</reference>
<reference key="4">
    <citation type="journal article" date="2008" name="Plant Cell Physiol.">
        <title>Antagonistic jacalin-related lectins regulate the size of ER body-type beta-glucosidase complexes in Arabidopsis thaliana.</title>
        <authorList>
            <person name="Nagano A.J."/>
            <person name="Fukao Y."/>
            <person name="Fujiwara M."/>
            <person name="Nishimura M."/>
            <person name="Hara-Nishimura I."/>
        </authorList>
    </citation>
    <scope>GENE FAMILY</scope>
    <scope>NOMENCLATURE</scope>
</reference>
<accession>Q9ZU23</accession>
<sequence length="730" mass="73939">MSWDDGKHTKVKRVQLTFDDVIRSIEVEYDGTSLKSQPRGTAGTKIDGFTLSSDEYITEVNGYYKTTFSGEVITSLTFKTNKRTYGTYGNKTSSYFSVAAPKDNQIVGFLGSSSHALNSIDAHFAPAPPPGSTGAKPGASGIGSDSGSIGSAGTNPGADGTRETEKNAGGSKPSSGSAGTNPGASAVGNGETEKNAGGSKPSSGSAGTNPGASAGGNGETEKNVGGSKPSSGKAGTNPGANAGGNGGTEKNAGGSKSSSGSARTNPGASAGGNGETVSNIGDTESNAGGSKSNDGANNGASGIESNAGSTGTNFGAGGTGGIGDTESDAGGSKTNSGNGGTNDGASGIGSNDGSTGTNPGAGGGTDSNIEGTENNVGGKETNPGASGIGNSDGSTGTSPEGTESNADGTKTNTGGKESNTGSESNTNSSPQKLEAQGGNGGNQWDDGTDHDGVMKIHVAVGGLGIEQIRFDYVKNGQLKEGPFHGVKGRGGTSTIEISHPDEYLVSVEGLYDSSNIIQGIQFQSNKHTSQYFGYEYYGDGTQFSLQVNEKKIIGFHGFADSHLNSLGAYFVPISSSSSSLTPPPNKVKAQGGSYGETFDDGAFDHVRKVYVGQGDSGVAYVKFDYEKDGKKETQEHGKMTLSGTEEFEVDSDDYITSMEVYVDKVYGYKSEIVIALTFKTFKGETSPRFGIETENKYEVKDGKGGKLAGFHGKASDVLYAIGAYFIPAAN</sequence>
<gene>
    <name type="primary">JAL5</name>
    <name type="ordered locus">At1g52000</name>
    <name type="ORF">F5F19.6</name>
</gene>
<protein>
    <recommendedName>
        <fullName>Jacalin-related lectin 5</fullName>
    </recommendedName>
</protein>
<proteinExistence type="evidence at transcript level"/>
<evidence type="ECO:0000255" key="1">
    <source>
        <dbReference type="PROSITE-ProRule" id="PRU01088"/>
    </source>
</evidence>
<evidence type="ECO:0000256" key="2">
    <source>
        <dbReference type="SAM" id="MobiDB-lite"/>
    </source>
</evidence>
<evidence type="ECO:0000305" key="3"/>
<dbReference type="EMBL" id="AC006216">
    <property type="protein sequence ID" value="AAD12691.1"/>
    <property type="molecule type" value="Genomic_DNA"/>
</dbReference>
<dbReference type="EMBL" id="CP002684">
    <property type="protein sequence ID" value="AEE32746.1"/>
    <property type="molecule type" value="Genomic_DNA"/>
</dbReference>
<dbReference type="EMBL" id="CP002684">
    <property type="protein sequence ID" value="ANM57711.1"/>
    <property type="molecule type" value="Genomic_DNA"/>
</dbReference>
<dbReference type="EMBL" id="AK226551">
    <property type="protein sequence ID" value="BAE98686.1"/>
    <property type="molecule type" value="mRNA"/>
</dbReference>
<dbReference type="PIR" id="F96559">
    <property type="entry name" value="F96559"/>
</dbReference>
<dbReference type="RefSeq" id="NP_001320196.1">
    <property type="nucleotide sequence ID" value="NM_001333521.1"/>
</dbReference>
<dbReference type="RefSeq" id="NP_175612.1">
    <property type="nucleotide sequence ID" value="NM_104081.4"/>
</dbReference>
<dbReference type="SMR" id="Q9ZU23"/>
<dbReference type="BioGRID" id="26854">
    <property type="interactions" value="1"/>
</dbReference>
<dbReference type="FunCoup" id="Q9ZU23">
    <property type="interactions" value="3"/>
</dbReference>
<dbReference type="STRING" id="3702.Q9ZU23"/>
<dbReference type="iPTMnet" id="Q9ZU23"/>
<dbReference type="PaxDb" id="3702-AT1G52000.1"/>
<dbReference type="ProteomicsDB" id="238983"/>
<dbReference type="EnsemblPlants" id="AT1G52000.1">
    <property type="protein sequence ID" value="AT1G52000.1"/>
    <property type="gene ID" value="AT1G52000"/>
</dbReference>
<dbReference type="EnsemblPlants" id="AT1G52000.2">
    <property type="protein sequence ID" value="AT1G52000.2"/>
    <property type="gene ID" value="AT1G52000"/>
</dbReference>
<dbReference type="GeneID" id="841629"/>
<dbReference type="Gramene" id="AT1G52000.1">
    <property type="protein sequence ID" value="AT1G52000.1"/>
    <property type="gene ID" value="AT1G52000"/>
</dbReference>
<dbReference type="Gramene" id="AT1G52000.2">
    <property type="protein sequence ID" value="AT1G52000.2"/>
    <property type="gene ID" value="AT1G52000"/>
</dbReference>
<dbReference type="KEGG" id="ath:AT1G52000"/>
<dbReference type="Araport" id="AT1G52000"/>
<dbReference type="TAIR" id="AT1G52000"/>
<dbReference type="eggNOG" id="ENOG502SDKK">
    <property type="taxonomic scope" value="Eukaryota"/>
</dbReference>
<dbReference type="HOGENOM" id="CLU_334441_0_0_1"/>
<dbReference type="InParanoid" id="Q9ZU23"/>
<dbReference type="PRO" id="PR:Q9ZU23"/>
<dbReference type="Proteomes" id="UP000006548">
    <property type="component" value="Chromosome 1"/>
</dbReference>
<dbReference type="ExpressionAtlas" id="Q9ZU23">
    <property type="expression patterns" value="baseline and differential"/>
</dbReference>
<dbReference type="GO" id="GO:0005634">
    <property type="term" value="C:nucleus"/>
    <property type="evidence" value="ECO:0007005"/>
    <property type="project" value="TAIR"/>
</dbReference>
<dbReference type="GO" id="GO:0030246">
    <property type="term" value="F:carbohydrate binding"/>
    <property type="evidence" value="ECO:0007669"/>
    <property type="project" value="UniProtKB-KW"/>
</dbReference>
<dbReference type="CDD" id="cd09612">
    <property type="entry name" value="Jacalin"/>
    <property type="match status" value="3"/>
</dbReference>
<dbReference type="FunFam" id="2.100.10.30:FF:000001">
    <property type="entry name" value="Jacalin-related lectin 33"/>
    <property type="match status" value="2"/>
</dbReference>
<dbReference type="Gene3D" id="2.100.10.30">
    <property type="entry name" value="Jacalin-like lectin domain"/>
    <property type="match status" value="3"/>
</dbReference>
<dbReference type="InterPro" id="IPR001229">
    <property type="entry name" value="Jacalin-like_lectin_dom"/>
</dbReference>
<dbReference type="InterPro" id="IPR033734">
    <property type="entry name" value="Jacalin-like_lectin_dom_plant"/>
</dbReference>
<dbReference type="InterPro" id="IPR036404">
    <property type="entry name" value="Jacalin-like_lectin_dom_sf"/>
</dbReference>
<dbReference type="PANTHER" id="PTHR47293">
    <property type="entry name" value="JACALIN-RELATED LECTIN 3"/>
    <property type="match status" value="1"/>
</dbReference>
<dbReference type="PANTHER" id="PTHR47293:SF64">
    <property type="entry name" value="JACALIN-RELATED LECTIN 35"/>
    <property type="match status" value="1"/>
</dbReference>
<dbReference type="Pfam" id="PF01419">
    <property type="entry name" value="Jacalin"/>
    <property type="match status" value="3"/>
</dbReference>
<dbReference type="SMART" id="SM00915">
    <property type="entry name" value="Jacalin"/>
    <property type="match status" value="3"/>
</dbReference>
<dbReference type="SUPFAM" id="SSF51101">
    <property type="entry name" value="Mannose-binding lectins"/>
    <property type="match status" value="3"/>
</dbReference>
<dbReference type="PROSITE" id="PS51752">
    <property type="entry name" value="JACALIN_LECTIN"/>
    <property type="match status" value="3"/>
</dbReference>
<keyword id="KW-0430">Lectin</keyword>
<keyword id="KW-1185">Reference proteome</keyword>
<keyword id="KW-0677">Repeat</keyword>
<organism>
    <name type="scientific">Arabidopsis thaliana</name>
    <name type="common">Mouse-ear cress</name>
    <dbReference type="NCBI Taxonomy" id="3702"/>
    <lineage>
        <taxon>Eukaryota</taxon>
        <taxon>Viridiplantae</taxon>
        <taxon>Streptophyta</taxon>
        <taxon>Embryophyta</taxon>
        <taxon>Tracheophyta</taxon>
        <taxon>Spermatophyta</taxon>
        <taxon>Magnoliopsida</taxon>
        <taxon>eudicotyledons</taxon>
        <taxon>Gunneridae</taxon>
        <taxon>Pentapetalae</taxon>
        <taxon>rosids</taxon>
        <taxon>malvids</taxon>
        <taxon>Brassicales</taxon>
        <taxon>Brassicaceae</taxon>
        <taxon>Camelineae</taxon>
        <taxon>Arabidopsis</taxon>
    </lineage>
</organism>
<name>JAL5_ARATH</name>